<evidence type="ECO:0000255" key="1">
    <source>
        <dbReference type="HAMAP-Rule" id="MF_00420"/>
    </source>
</evidence>
<accession>Q5LS98</accession>
<sequence length="719" mass="76046">MQEPAITPDLIAAHGLKPEEYDMILEIIGREPTFTELGIFSAMWNEHCSYKSSKKWLRTLPTSGPQVICGPGENAGVVDIGDGQAVVFKMESHNHPSYIEPYQGAATGVGGILRDVFTMGARPIASMNALSFGEPSHPKTRQLVNGVVEGIGGYGNCFGVPCVGGEVRFHPAYNGNCLVNAFAAGLADSDKIFYSAASGVGMPVVYLGAKTGRDGVGGATMASAEFDDTIEEKRPTVQVGDPFTEKRLMEATLELMQTGAVISIQDMGAAGLTCSAVEMGDKGGLGVRLDLENVPQREENMTAYEMMLSESQERMLMVLKPELEAEARAVFEKWDLDFAIVGETIAEDRFLIMHHGEVKADLVLSKLSSTAPEYDRPWVPTPAAEPLAEVPQIDPIDGLRALLASPNYGGKQWVYEQYDTMVMADSARTPGLGAGIVRVHGTDKALAFTSDVTPRYVRANPEEGGKQAVAEAYRNLTAVGARPLATTDNLNFGNPEKPEIMGQFVGAIKGIGAACAALDMPIVSGNVSLYNETDGTAILPTPTIGAVGLLASTDEIIGKEVREGHVALVVGETTGHLGQSALLAEVFNREDGDAPHVDLEAERRNGDFIRANRALIKACTDLGDGGLALAAFELAEGAGVGLHLDDAPTEILFGEDQARYLVACNFDQAEALMSAAGQTGVTVTSVGRFTGDTVRIGGSEALLADLAATFRASFAAAVA</sequence>
<feature type="chain" id="PRO_0000100484" description="Phosphoribosylformylglycinamidine synthase subunit PurL">
    <location>
        <begin position="1"/>
        <end position="719"/>
    </location>
</feature>
<feature type="active site" evidence="1">
    <location>
        <position position="47"/>
    </location>
</feature>
<feature type="active site" description="Proton acceptor" evidence="1">
    <location>
        <position position="93"/>
    </location>
</feature>
<feature type="binding site" evidence="1">
    <location>
        <position position="50"/>
    </location>
    <ligand>
        <name>ATP</name>
        <dbReference type="ChEBI" id="CHEBI:30616"/>
    </ligand>
</feature>
<feature type="binding site" evidence="1">
    <location>
        <position position="89"/>
    </location>
    <ligand>
        <name>ATP</name>
        <dbReference type="ChEBI" id="CHEBI:30616"/>
    </ligand>
</feature>
<feature type="binding site" evidence="1">
    <location>
        <position position="91"/>
    </location>
    <ligand>
        <name>Mg(2+)</name>
        <dbReference type="ChEBI" id="CHEBI:18420"/>
        <label>1</label>
    </ligand>
</feature>
<feature type="binding site" evidence="1">
    <location>
        <begin position="92"/>
        <end position="95"/>
    </location>
    <ligand>
        <name>substrate</name>
    </ligand>
</feature>
<feature type="binding site" evidence="1">
    <location>
        <position position="114"/>
    </location>
    <ligand>
        <name>substrate</name>
    </ligand>
</feature>
<feature type="binding site" evidence="1">
    <location>
        <position position="115"/>
    </location>
    <ligand>
        <name>Mg(2+)</name>
        <dbReference type="ChEBI" id="CHEBI:18420"/>
        <label>2</label>
    </ligand>
</feature>
<feature type="binding site" evidence="1">
    <location>
        <position position="238"/>
    </location>
    <ligand>
        <name>substrate</name>
    </ligand>
</feature>
<feature type="binding site" evidence="1">
    <location>
        <position position="266"/>
    </location>
    <ligand>
        <name>Mg(2+)</name>
        <dbReference type="ChEBI" id="CHEBI:18420"/>
        <label>2</label>
    </ligand>
</feature>
<feature type="binding site" evidence="1">
    <location>
        <begin position="310"/>
        <end position="312"/>
    </location>
    <ligand>
        <name>substrate</name>
    </ligand>
</feature>
<feature type="binding site" evidence="1">
    <location>
        <position position="488"/>
    </location>
    <ligand>
        <name>ATP</name>
        <dbReference type="ChEBI" id="CHEBI:30616"/>
    </ligand>
</feature>
<feature type="binding site" evidence="1">
    <location>
        <position position="525"/>
    </location>
    <ligand>
        <name>ATP</name>
        <dbReference type="ChEBI" id="CHEBI:30616"/>
    </ligand>
</feature>
<feature type="binding site" evidence="1">
    <location>
        <position position="526"/>
    </location>
    <ligand>
        <name>Mg(2+)</name>
        <dbReference type="ChEBI" id="CHEBI:18420"/>
        <label>1</label>
    </ligand>
</feature>
<feature type="binding site" evidence="1">
    <location>
        <position position="528"/>
    </location>
    <ligand>
        <name>substrate</name>
    </ligand>
</feature>
<keyword id="KW-0067">ATP-binding</keyword>
<keyword id="KW-0963">Cytoplasm</keyword>
<keyword id="KW-0436">Ligase</keyword>
<keyword id="KW-0460">Magnesium</keyword>
<keyword id="KW-0479">Metal-binding</keyword>
<keyword id="KW-0547">Nucleotide-binding</keyword>
<keyword id="KW-0658">Purine biosynthesis</keyword>
<keyword id="KW-1185">Reference proteome</keyword>
<proteinExistence type="inferred from homology"/>
<gene>
    <name evidence="1" type="primary">purL</name>
    <name type="ordered locus">SPO1870</name>
</gene>
<organism>
    <name type="scientific">Ruegeria pomeroyi (strain ATCC 700808 / DSM 15171 / DSS-3)</name>
    <name type="common">Silicibacter pomeroyi</name>
    <dbReference type="NCBI Taxonomy" id="246200"/>
    <lineage>
        <taxon>Bacteria</taxon>
        <taxon>Pseudomonadati</taxon>
        <taxon>Pseudomonadota</taxon>
        <taxon>Alphaproteobacteria</taxon>
        <taxon>Rhodobacterales</taxon>
        <taxon>Roseobacteraceae</taxon>
        <taxon>Ruegeria</taxon>
    </lineage>
</organism>
<comment type="function">
    <text evidence="1">Part of the phosphoribosylformylglycinamidine synthase complex involved in the purines biosynthetic pathway. Catalyzes the ATP-dependent conversion of formylglycinamide ribonucleotide (FGAR) and glutamine to yield formylglycinamidine ribonucleotide (FGAM) and glutamate. The FGAM synthase complex is composed of three subunits. PurQ produces an ammonia molecule by converting glutamine to glutamate. PurL transfers the ammonia molecule to FGAR to form FGAM in an ATP-dependent manner. PurS interacts with PurQ and PurL and is thought to assist in the transfer of the ammonia molecule from PurQ to PurL.</text>
</comment>
<comment type="catalytic activity">
    <reaction evidence="1">
        <text>N(2)-formyl-N(1)-(5-phospho-beta-D-ribosyl)glycinamide + L-glutamine + ATP + H2O = 2-formamido-N(1)-(5-O-phospho-beta-D-ribosyl)acetamidine + L-glutamate + ADP + phosphate + H(+)</text>
        <dbReference type="Rhea" id="RHEA:17129"/>
        <dbReference type="ChEBI" id="CHEBI:15377"/>
        <dbReference type="ChEBI" id="CHEBI:15378"/>
        <dbReference type="ChEBI" id="CHEBI:29985"/>
        <dbReference type="ChEBI" id="CHEBI:30616"/>
        <dbReference type="ChEBI" id="CHEBI:43474"/>
        <dbReference type="ChEBI" id="CHEBI:58359"/>
        <dbReference type="ChEBI" id="CHEBI:147286"/>
        <dbReference type="ChEBI" id="CHEBI:147287"/>
        <dbReference type="ChEBI" id="CHEBI:456216"/>
        <dbReference type="EC" id="6.3.5.3"/>
    </reaction>
</comment>
<comment type="pathway">
    <text evidence="1">Purine metabolism; IMP biosynthesis via de novo pathway; 5-amino-1-(5-phospho-D-ribosyl)imidazole from N(2)-formyl-N(1)-(5-phospho-D-ribosyl)glycinamide: step 1/2.</text>
</comment>
<comment type="subunit">
    <text evidence="1">Monomer. Part of the FGAM synthase complex composed of 1 PurL, 1 PurQ and 2 PurS subunits.</text>
</comment>
<comment type="subcellular location">
    <subcellularLocation>
        <location evidence="1">Cytoplasm</location>
    </subcellularLocation>
</comment>
<comment type="similarity">
    <text evidence="1">Belongs to the FGAMS family.</text>
</comment>
<name>PURL_RUEPO</name>
<dbReference type="EC" id="6.3.5.3" evidence="1"/>
<dbReference type="EMBL" id="CP000031">
    <property type="protein sequence ID" value="AAV95149.1"/>
    <property type="molecule type" value="Genomic_DNA"/>
</dbReference>
<dbReference type="RefSeq" id="WP_011047603.1">
    <property type="nucleotide sequence ID" value="NC_003911.12"/>
</dbReference>
<dbReference type="SMR" id="Q5LS98"/>
<dbReference type="STRING" id="246200.SPO1870"/>
<dbReference type="PaxDb" id="246200-SPO1870"/>
<dbReference type="KEGG" id="sil:SPO1870"/>
<dbReference type="eggNOG" id="COG0046">
    <property type="taxonomic scope" value="Bacteria"/>
</dbReference>
<dbReference type="HOGENOM" id="CLU_003100_0_1_5"/>
<dbReference type="OrthoDB" id="9804441at2"/>
<dbReference type="UniPathway" id="UPA00074">
    <property type="reaction ID" value="UER00128"/>
</dbReference>
<dbReference type="Proteomes" id="UP000001023">
    <property type="component" value="Chromosome"/>
</dbReference>
<dbReference type="GO" id="GO:0005737">
    <property type="term" value="C:cytoplasm"/>
    <property type="evidence" value="ECO:0007669"/>
    <property type="project" value="UniProtKB-SubCell"/>
</dbReference>
<dbReference type="GO" id="GO:0005524">
    <property type="term" value="F:ATP binding"/>
    <property type="evidence" value="ECO:0007669"/>
    <property type="project" value="UniProtKB-UniRule"/>
</dbReference>
<dbReference type="GO" id="GO:0000287">
    <property type="term" value="F:magnesium ion binding"/>
    <property type="evidence" value="ECO:0007669"/>
    <property type="project" value="UniProtKB-UniRule"/>
</dbReference>
<dbReference type="GO" id="GO:0004642">
    <property type="term" value="F:phosphoribosylformylglycinamidine synthase activity"/>
    <property type="evidence" value="ECO:0007669"/>
    <property type="project" value="UniProtKB-UniRule"/>
</dbReference>
<dbReference type="GO" id="GO:0006189">
    <property type="term" value="P:'de novo' IMP biosynthetic process"/>
    <property type="evidence" value="ECO:0007669"/>
    <property type="project" value="UniProtKB-UniRule"/>
</dbReference>
<dbReference type="CDD" id="cd02203">
    <property type="entry name" value="PurL_repeat1"/>
    <property type="match status" value="1"/>
</dbReference>
<dbReference type="CDD" id="cd02204">
    <property type="entry name" value="PurL_repeat2"/>
    <property type="match status" value="1"/>
</dbReference>
<dbReference type="FunFam" id="3.30.1330.10:FF:000004">
    <property type="entry name" value="Phosphoribosylformylglycinamidine synthase subunit PurL"/>
    <property type="match status" value="1"/>
</dbReference>
<dbReference type="Gene3D" id="3.90.650.10">
    <property type="entry name" value="PurM-like C-terminal domain"/>
    <property type="match status" value="2"/>
</dbReference>
<dbReference type="Gene3D" id="3.30.1330.10">
    <property type="entry name" value="PurM-like, N-terminal domain"/>
    <property type="match status" value="2"/>
</dbReference>
<dbReference type="HAMAP" id="MF_00420">
    <property type="entry name" value="PurL_2"/>
    <property type="match status" value="1"/>
</dbReference>
<dbReference type="InterPro" id="IPR010074">
    <property type="entry name" value="PRibForGlyAmidine_synth_PurL"/>
</dbReference>
<dbReference type="InterPro" id="IPR041609">
    <property type="entry name" value="PurL_linker"/>
</dbReference>
<dbReference type="InterPro" id="IPR010918">
    <property type="entry name" value="PurM-like_C_dom"/>
</dbReference>
<dbReference type="InterPro" id="IPR036676">
    <property type="entry name" value="PurM-like_C_sf"/>
</dbReference>
<dbReference type="InterPro" id="IPR016188">
    <property type="entry name" value="PurM-like_N"/>
</dbReference>
<dbReference type="InterPro" id="IPR036921">
    <property type="entry name" value="PurM-like_N_sf"/>
</dbReference>
<dbReference type="NCBIfam" id="TIGR01736">
    <property type="entry name" value="FGAM_synth_II"/>
    <property type="match status" value="1"/>
</dbReference>
<dbReference type="NCBIfam" id="NF002290">
    <property type="entry name" value="PRK01213.1"/>
    <property type="match status" value="1"/>
</dbReference>
<dbReference type="PANTHER" id="PTHR43555">
    <property type="entry name" value="PHOSPHORIBOSYLFORMYLGLYCINAMIDINE SYNTHASE SUBUNIT PURL"/>
    <property type="match status" value="1"/>
</dbReference>
<dbReference type="PANTHER" id="PTHR43555:SF1">
    <property type="entry name" value="PHOSPHORIBOSYLFORMYLGLYCINAMIDINE SYNTHASE SUBUNIT PURL"/>
    <property type="match status" value="1"/>
</dbReference>
<dbReference type="Pfam" id="PF00586">
    <property type="entry name" value="AIRS"/>
    <property type="match status" value="2"/>
</dbReference>
<dbReference type="Pfam" id="PF02769">
    <property type="entry name" value="AIRS_C"/>
    <property type="match status" value="2"/>
</dbReference>
<dbReference type="Pfam" id="PF18072">
    <property type="entry name" value="FGAR-AT_linker"/>
    <property type="match status" value="1"/>
</dbReference>
<dbReference type="PIRSF" id="PIRSF001587">
    <property type="entry name" value="FGAM_synthase_II"/>
    <property type="match status" value="1"/>
</dbReference>
<dbReference type="SUPFAM" id="SSF56042">
    <property type="entry name" value="PurM C-terminal domain-like"/>
    <property type="match status" value="2"/>
</dbReference>
<dbReference type="SUPFAM" id="SSF55326">
    <property type="entry name" value="PurM N-terminal domain-like"/>
    <property type="match status" value="2"/>
</dbReference>
<reference key="1">
    <citation type="journal article" date="2004" name="Nature">
        <title>Genome sequence of Silicibacter pomeroyi reveals adaptations to the marine environment.</title>
        <authorList>
            <person name="Moran M.A."/>
            <person name="Buchan A."/>
            <person name="Gonzalez J.M."/>
            <person name="Heidelberg J.F."/>
            <person name="Whitman W.B."/>
            <person name="Kiene R.P."/>
            <person name="Henriksen J.R."/>
            <person name="King G.M."/>
            <person name="Belas R."/>
            <person name="Fuqua C."/>
            <person name="Brinkac L.M."/>
            <person name="Lewis M."/>
            <person name="Johri S."/>
            <person name="Weaver B."/>
            <person name="Pai G."/>
            <person name="Eisen J.A."/>
            <person name="Rahe E."/>
            <person name="Sheldon W.M."/>
            <person name="Ye W."/>
            <person name="Miller T.R."/>
            <person name="Carlton J."/>
            <person name="Rasko D.A."/>
            <person name="Paulsen I.T."/>
            <person name="Ren Q."/>
            <person name="Daugherty S.C."/>
            <person name="DeBoy R.T."/>
            <person name="Dodson R.J."/>
            <person name="Durkin A.S."/>
            <person name="Madupu R."/>
            <person name="Nelson W.C."/>
            <person name="Sullivan S.A."/>
            <person name="Rosovitz M.J."/>
            <person name="Haft D.H."/>
            <person name="Selengut J."/>
            <person name="Ward N."/>
        </authorList>
    </citation>
    <scope>NUCLEOTIDE SEQUENCE [LARGE SCALE GENOMIC DNA]</scope>
    <source>
        <strain>ATCC 700808 / DSM 15171 / DSS-3</strain>
    </source>
</reference>
<reference key="2">
    <citation type="journal article" date="2014" name="Stand. Genomic Sci.">
        <title>An updated genome annotation for the model marine bacterium Ruegeria pomeroyi DSS-3.</title>
        <authorList>
            <person name="Rivers A.R."/>
            <person name="Smith C.B."/>
            <person name="Moran M.A."/>
        </authorList>
    </citation>
    <scope>GENOME REANNOTATION</scope>
    <source>
        <strain>ATCC 700808 / DSM 15171 / DSS-3</strain>
    </source>
</reference>
<protein>
    <recommendedName>
        <fullName evidence="1">Phosphoribosylformylglycinamidine synthase subunit PurL</fullName>
        <shortName evidence="1">FGAM synthase</shortName>
        <ecNumber evidence="1">6.3.5.3</ecNumber>
    </recommendedName>
    <alternativeName>
        <fullName evidence="1">Formylglycinamide ribonucleotide amidotransferase subunit II</fullName>
        <shortName evidence="1">FGAR amidotransferase II</shortName>
        <shortName evidence="1">FGAR-AT II</shortName>
    </alternativeName>
    <alternativeName>
        <fullName evidence="1">Glutamine amidotransferase PurL</fullName>
    </alternativeName>
    <alternativeName>
        <fullName evidence="1">Phosphoribosylformylglycinamidine synthase subunit II</fullName>
    </alternativeName>
</protein>